<reference evidence="17" key="1">
    <citation type="journal article" date="2000" name="Nature">
        <title>MOD-1 is a serotonin-gated chloride channel that modulates locomotory behaviour in C. elegans.</title>
        <authorList>
            <person name="Ranganathan R."/>
            <person name="Cannon S.C."/>
            <person name="Horvitz H.R."/>
        </authorList>
    </citation>
    <scope>NUCLEOTIDE SEQUENCE [MRNA]</scope>
    <scope>FUNCTION</scope>
    <scope>MUTAGENESIS OF ALA-281</scope>
</reference>
<reference evidence="18" key="2">
    <citation type="journal article" date="1998" name="Science">
        <title>Genome sequence of the nematode C. elegans: a platform for investigating biology.</title>
        <authorList>
            <consortium name="The C. elegans sequencing consortium"/>
        </authorList>
    </citation>
    <scope>NUCLEOTIDE SEQUENCE [LARGE SCALE GENOMIC DNA]</scope>
    <source>
        <strain evidence="18">Bristol N2</strain>
    </source>
</reference>
<reference evidence="15" key="3">
    <citation type="journal article" date="2003" name="J. Am. Chem. Soc.">
        <title>Different binding orientations for the same agonist at homologous receptors: a lock and key or a simple wedge?</title>
        <authorList>
            <person name="Mu T.W."/>
            <person name="Lester H.A."/>
            <person name="Dougherty D.A."/>
        </authorList>
    </citation>
    <scope>FUNCTION</scope>
</reference>
<reference evidence="15" key="4">
    <citation type="journal article" date="2005" name="J. Biol. Chem.">
        <title>Chimeric mutations in the M2 segment of the 5-hydroxytryptamine-gated chloride channel MOD-1 define a minimal determinant of anion/cation permeability.</title>
        <authorList>
            <person name="Menard C."/>
            <person name="Horvitz H.R."/>
            <person name="Cannon S."/>
        </authorList>
    </citation>
    <scope>FUNCTION</scope>
    <scope>MUTAGENESIS OF 266-LYS--ALA-267; 266-LYS--THR-272 AND ALA-270</scope>
</reference>
<reference evidence="15" key="5">
    <citation type="journal article" date="2005" name="J. Neurosci.">
        <title>The G-protein-coupled serotonin receptor SER-1 regulates egg laying and male mating behaviors in Caenorhabditis elegans.</title>
        <authorList>
            <person name="Carnell L."/>
            <person name="Illi J."/>
            <person name="Hong S.W."/>
            <person name="McIntire S.L."/>
        </authorList>
    </citation>
    <scope>FUNCTION</scope>
</reference>
<reference evidence="15" key="6">
    <citation type="journal article" date="2005" name="Nature">
        <title>Pathogenic bacteria induce aversive olfactory learning in Caenorhabditis elegans.</title>
        <authorList>
            <person name="Zhang Y."/>
            <person name="Lu H."/>
            <person name="Bargmann C.I."/>
        </authorList>
    </citation>
    <scope>FUNCTION</scope>
</reference>
<reference evidence="15" key="7">
    <citation type="journal article" date="2009" name="J. Neurosci.">
        <title>Three distinct amine receptors operating at different levels within the locomotory circuit are each essential for the serotonergic modulation of chemosensation in Caenorhabditis elegans.</title>
        <authorList>
            <person name="Harris G.P."/>
            <person name="Hapiak V.M."/>
            <person name="Wragg R.T."/>
            <person name="Miller S.B."/>
            <person name="Hughes L.J."/>
            <person name="Hobson R.J."/>
            <person name="Steven R."/>
            <person name="Bamber B."/>
            <person name="Komuniecki R.W."/>
        </authorList>
    </citation>
    <scope>FUNCTION</scope>
</reference>
<reference evidence="15" key="8">
    <citation type="journal article" date="2012" name="Genetics">
        <title>Receptors and other signaling proteins required for serotonin control of locomotion in Caenorhabditis elegans.</title>
        <authorList>
            <person name="Guerel G."/>
            <person name="Gustafson M.A."/>
            <person name="Pepper J.S."/>
            <person name="Horvitz H.R."/>
            <person name="Koelle M.R."/>
        </authorList>
    </citation>
    <scope>FUNCTION</scope>
    <scope>TISSUE SPECIFICITY</scope>
    <scope>DEVELOPMENTAL STAGE</scope>
</reference>
<reference evidence="15" key="9">
    <citation type="journal article" date="2013" name="Cell">
        <title>Serotonin and the neuropeptide PDF initiate and extend opposing behavioral states in C. elegans.</title>
        <authorList>
            <person name="Flavell S.W."/>
            <person name="Pokala N."/>
            <person name="Macosko E.Z."/>
            <person name="Albrecht D.R."/>
            <person name="Larsch J."/>
            <person name="Bargmann C.I."/>
        </authorList>
    </citation>
    <scope>FUNCTION</scope>
    <scope>TISSUE SPECIFICITY</scope>
</reference>
<reference evidence="15" key="10">
    <citation type="journal article" date="2013" name="Cell Metab.">
        <title>An integrated serotonin and octopamine neuronal circuit directs the release of an endocrine signal to control C. elegans body fat.</title>
        <authorList>
            <person name="Noble T."/>
            <person name="Stieglitz J."/>
            <person name="Srinivasan S."/>
        </authorList>
    </citation>
    <scope>FUNCTION</scope>
</reference>
<evidence type="ECO:0000255" key="1"/>
<evidence type="ECO:0000255" key="2">
    <source>
        <dbReference type="PROSITE-ProRule" id="PRU00498"/>
    </source>
</evidence>
<evidence type="ECO:0000255" key="3">
    <source>
        <dbReference type="RuleBase" id="RU000687"/>
    </source>
</evidence>
<evidence type="ECO:0000256" key="4">
    <source>
        <dbReference type="SAM" id="MobiDB-lite"/>
    </source>
</evidence>
<evidence type="ECO:0000269" key="5">
    <source>
    </source>
</evidence>
<evidence type="ECO:0000269" key="6">
    <source>
    </source>
</evidence>
<evidence type="ECO:0000269" key="7">
    <source>
    </source>
</evidence>
<evidence type="ECO:0000269" key="8">
    <source>
    </source>
</evidence>
<evidence type="ECO:0000269" key="9">
    <source>
    </source>
</evidence>
<evidence type="ECO:0000269" key="10">
    <source>
    </source>
</evidence>
<evidence type="ECO:0000269" key="11">
    <source>
    </source>
</evidence>
<evidence type="ECO:0000269" key="12">
    <source>
    </source>
</evidence>
<evidence type="ECO:0000269" key="13">
    <source>
    </source>
</evidence>
<evidence type="ECO:0000303" key="14">
    <source>
    </source>
</evidence>
<evidence type="ECO:0000305" key="15"/>
<evidence type="ECO:0000305" key="16">
    <source>
    </source>
</evidence>
<evidence type="ECO:0000312" key="17">
    <source>
        <dbReference type="EMBL" id="AAG36975.1"/>
    </source>
</evidence>
<evidence type="ECO:0000312" key="18">
    <source>
        <dbReference type="Proteomes" id="UP000001940"/>
    </source>
</evidence>
<evidence type="ECO:0000312" key="19">
    <source>
        <dbReference type="WormBase" id="K06C4.6a"/>
    </source>
</evidence>
<evidence type="ECO:0000312" key="20">
    <source>
        <dbReference type="WormBase" id="K06C4.6b"/>
    </source>
</evidence>
<evidence type="ECO:0000312" key="21">
    <source>
        <dbReference type="WormBase" id="K06C4.6c"/>
    </source>
</evidence>
<comment type="function">
    <text evidence="5 6 7 8 9 10 11 12 13">Functions as a 5-hydroxytryptamine (serotonin) receptor (PubMed:11100728, PubMed:12783521, PubMed:23023001). This receptor is a ligand-gated anion-specific ion channel, selective for chloride ions (PubMed:11100728, PubMed:15878844). Relays a long-range endocrine signal from the body cavity neurons to modulate distal adipose triglyceride lipase atgl-1 function, via the nuclear receptor nhr-76 (PubMed:24120942). Together with the G-protein coupled serotonin receptor ser-1 involved in male mating behavior (PubMed:16291940). May mediate an inhibitory effect of serotonin on egg laying (PubMed:16291940). Involved in regulating locomotory behavior, perhaps by modulating interneuronal signaling, acting in concert with G-protein coupled serotonin receptor ser-4 (PubMed:19193891, PubMed:23023001). In the presence of food, plays a role in initiating and extending dwelling behavior, perhaps acting in AIY, RIF and ASI neurons, in opposition to neuropeptide PDF-mediated signaling (PubMed:23972393). Plays a role in aversive learning upon exposure to pathogens such as Gram-negative bacterium P.aeruginosa strain PA14; perhaps acting in interneurons in response to serotonin released by the serotonergic ADF neurons (PubMed:16281027).</text>
</comment>
<comment type="subcellular location">
    <subcellularLocation>
        <location evidence="1">Membrane</location>
        <topology evidence="1">Multi-pass membrane protein</topology>
    </subcellularLocation>
    <subcellularLocation>
        <location evidence="6">Cell membrane</location>
    </subcellularLocation>
</comment>
<comment type="alternative products">
    <event type="alternative splicing"/>
    <isoform>
        <id>Q9GQ00-1</id>
        <name evidence="19">a</name>
        <sequence type="displayed"/>
    </isoform>
    <isoform>
        <id>Q9GQ00-2</id>
        <name evidence="20">b</name>
        <sequence type="described" ref="VSP_061451"/>
    </isoform>
    <isoform>
        <id>Q9GQ00-3</id>
        <name evidence="21">c</name>
        <sequence type="described" ref="VSP_061452 VSP_061453"/>
    </isoform>
</comment>
<comment type="tissue specificity">
    <text evidence="11 12">Expressed in a subset of muscles, and head and tail neurons, including RME and GABAergic ventral nerve cord neurons (PubMed:23023001). Expressed in AIY, RME, RID, RIF, ASI, DD1-6, and PVN neurons (PubMed:23972393).</text>
</comment>
<comment type="developmental stage">
    <text evidence="11">Expressed in all body-wall muscles in L3 stage larvae, and at a lower level in L4 stage larvae and adults.</text>
</comment>
<comment type="similarity">
    <text evidence="3">Belongs to the ligand-gated ion channel (TC 1.A.9) family.</text>
</comment>
<accession>Q9GQ00</accession>
<accession>H2L0B8</accession>
<accession>Q8MPU3</accession>
<accession>Q9GYH1</accession>
<feature type="signal peptide" evidence="1">
    <location>
        <begin position="1"/>
        <end position="20"/>
    </location>
</feature>
<feature type="chain" id="PRO_5015099770" description="Serotonin-gated chloride channel mod-1" evidence="1">
    <location>
        <begin position="21"/>
        <end position="489"/>
    </location>
</feature>
<feature type="topological domain" description="Extracellular" evidence="16">
    <location>
        <begin position="21"/>
        <end position="240"/>
    </location>
</feature>
<feature type="transmembrane region" description="Helical" evidence="1">
    <location>
        <begin position="241"/>
        <end position="261"/>
    </location>
</feature>
<feature type="transmembrane region" description="Helical" evidence="1">
    <location>
        <begin position="274"/>
        <end position="294"/>
    </location>
</feature>
<feature type="transmembrane region" description="Helical" evidence="1">
    <location>
        <begin position="304"/>
        <end position="324"/>
    </location>
</feature>
<feature type="topological domain" description="Cytoplasmic" evidence="16">
    <location>
        <begin position="325"/>
        <end position="458"/>
    </location>
</feature>
<feature type="transmembrane region" description="Helical" evidence="1">
    <location>
        <begin position="459"/>
        <end position="479"/>
    </location>
</feature>
<feature type="region of interest" description="Disordered" evidence="4">
    <location>
        <begin position="365"/>
        <end position="398"/>
    </location>
</feature>
<feature type="compositionally biased region" description="Polar residues" evidence="4">
    <location>
        <begin position="372"/>
        <end position="391"/>
    </location>
</feature>
<feature type="binding site" evidence="16">
    <location>
        <position position="180"/>
    </location>
    <ligand>
        <name>serotonin</name>
        <dbReference type="ChEBI" id="CHEBI:350546"/>
        <note>agonist</note>
    </ligand>
</feature>
<feature type="binding site" evidence="16">
    <location>
        <position position="226"/>
    </location>
    <ligand>
        <name>serotonin</name>
        <dbReference type="ChEBI" id="CHEBI:350546"/>
        <note>agonist</note>
    </ligand>
</feature>
<feature type="glycosylation site" description="N-linked (GlcNAc...) asparagine" evidence="2">
    <location>
        <position position="44"/>
    </location>
</feature>
<feature type="glycosylation site" description="N-linked (GlcNAc...) asparagine" evidence="2">
    <location>
        <position position="103"/>
    </location>
</feature>
<feature type="glycosylation site" description="N-linked (GlcNAc...) asparagine" evidence="2">
    <location>
        <position position="144"/>
    </location>
</feature>
<feature type="splice variant" id="VSP_061451" description="In isoform b." evidence="15">
    <location>
        <begin position="422"/>
        <end position="435"/>
    </location>
</feature>
<feature type="splice variant" id="VSP_061452" description="In isoform c." evidence="15">
    <original>MRSTSPP</original>
    <variation>VTVKVVN</variation>
    <location>
        <begin position="436"/>
        <end position="442"/>
    </location>
</feature>
<feature type="splice variant" id="VSP_061453" description="In isoform c." evidence="15">
    <location>
        <begin position="443"/>
        <end position="489"/>
    </location>
</feature>
<feature type="mutagenesis site" description="Converts the channel ion selectivity from anionic to cationic; most selective for potassium ions." evidence="7">
    <original>KALPART</original>
    <variation>ELPARV</variation>
    <location>
        <begin position="266"/>
        <end position="272"/>
    </location>
</feature>
<feature type="mutagenesis site" description="Converts the channel ion selectivity from anionic to cationic." evidence="7">
    <original>KA</original>
    <variation>E</variation>
    <location>
        <begin position="266"/>
        <end position="267"/>
    </location>
</feature>
<feature type="mutagenesis site" description="Converts the channel ion selectivity from anionic to cationic." evidence="7">
    <original>A</original>
    <variation>E</variation>
    <location>
        <position position="270"/>
    </location>
</feature>
<feature type="mutagenesis site" description="In n3034; locomotory rate of food-deprived animals is significantly faster than that of the wild type; resistant to exogenous serotonin treatment, unlike wild-type animals." evidence="5">
    <original>A</original>
    <variation>V</variation>
    <location>
        <position position="281"/>
    </location>
</feature>
<proteinExistence type="evidence at protein level"/>
<organism evidence="18">
    <name type="scientific">Caenorhabditis elegans</name>
    <dbReference type="NCBI Taxonomy" id="6239"/>
    <lineage>
        <taxon>Eukaryota</taxon>
        <taxon>Metazoa</taxon>
        <taxon>Ecdysozoa</taxon>
        <taxon>Nematoda</taxon>
        <taxon>Chromadorea</taxon>
        <taxon>Rhabditida</taxon>
        <taxon>Rhabditina</taxon>
        <taxon>Rhabditomorpha</taxon>
        <taxon>Rhabditoidea</taxon>
        <taxon>Rhabditidae</taxon>
        <taxon>Peloderinae</taxon>
        <taxon>Caenorhabditis</taxon>
    </lineage>
</organism>
<sequence length="489" mass="56143">MKFIPEITLLLLLFVHSTQAKGKRRKCPEGAWSEGKIMNTIMSNYTKMLPDAEDSVQVNIEIHVQDMGSLNEISSDFEIDILFTQLWHDSALSFAHLPACKRNITMETRLLPKIWSPNTCMINSKRTTVHASPSENVMVILYENGTVWINHRLSVKSPCNLDLRQFPFDTQTCILIFESYSHNSEEVELHWMEEAVTLMKPIQLPDFDMVHYSTKKETLLYPNGYWDQLQVTFTFKRRYGFYIIQAYVPTYLTIIVSWVSFCMEPKALPARTTVGISSLLALTFQFGNILKNLPRVSYVKAMDVWMLGCISFVFGTMVELAFVCYISRCQNSVRNAERRRERMRNSQVWANGSCRTRSNGYANGGSVISHYHPTSNGNGNNNRHDTPQVTGRGSLHRNGPPSPLNLQMTTFDSEIPLTFDQLPVSMESDRPLIEEMRSTSPPPPSGCLARFHPEAVDKFSIVAFPLAFTMFNLVYWWHYLSQTFDQNYQ</sequence>
<keyword id="KW-0025">Alternative splicing</keyword>
<keyword id="KW-1003">Cell membrane</keyword>
<keyword id="KW-0175">Coiled coil</keyword>
<keyword id="KW-0325">Glycoprotein</keyword>
<keyword id="KW-0407">Ion channel</keyword>
<keyword id="KW-0406">Ion transport</keyword>
<keyword id="KW-0472">Membrane</keyword>
<keyword id="KW-0614">Plasmid</keyword>
<keyword id="KW-1185">Reference proteome</keyword>
<keyword id="KW-0732">Signal</keyword>
<keyword id="KW-0812">Transmembrane</keyword>
<keyword id="KW-1133">Transmembrane helix</keyword>
<keyword id="KW-0813">Transport</keyword>
<dbReference type="EMBL" id="AF303088">
    <property type="protein sequence ID" value="AAG36975.1"/>
    <property type="molecule type" value="mRNA"/>
</dbReference>
<dbReference type="EMBL" id="BX284605">
    <property type="protein sequence ID" value="CCD72364.1"/>
    <property type="molecule type" value="Genomic_DNA"/>
</dbReference>
<dbReference type="EMBL" id="BX284605">
    <property type="protein sequence ID" value="CCD72365.1"/>
    <property type="molecule type" value="Genomic_DNA"/>
</dbReference>
<dbReference type="EMBL" id="BX284605">
    <property type="protein sequence ID" value="CCD72366.1"/>
    <property type="molecule type" value="Genomic_DNA"/>
</dbReference>
<dbReference type="RefSeq" id="NP_001024034.1">
    <molecule id="Q9GQ00-2"/>
    <property type="nucleotide sequence ID" value="NM_001028863.5"/>
</dbReference>
<dbReference type="RefSeq" id="NP_001024035.1">
    <molecule id="Q9GQ00-3"/>
    <property type="nucleotide sequence ID" value="NM_001028864.4"/>
</dbReference>
<dbReference type="RefSeq" id="NP_741580.1">
    <molecule id="Q9GQ00-1"/>
    <property type="nucleotide sequence ID" value="NM_171495.6"/>
</dbReference>
<dbReference type="SMR" id="Q9GQ00"/>
<dbReference type="FunCoup" id="Q9GQ00">
    <property type="interactions" value="19"/>
</dbReference>
<dbReference type="STRING" id="6239.K06C4.6a.1"/>
<dbReference type="TCDB" id="1.A.9.6.1">
    <property type="family name" value="the neurotransmitter receptor, cys loop, ligand-gated ion channel (lic) family"/>
</dbReference>
<dbReference type="GlyCosmos" id="Q9GQ00">
    <property type="glycosylation" value="3 sites, No reported glycans"/>
</dbReference>
<dbReference type="PaxDb" id="6239-K06C4.6a"/>
<dbReference type="EnsemblMetazoa" id="K06C4.6a.1">
    <molecule id="Q9GQ00-1"/>
    <property type="protein sequence ID" value="K06C4.6a.1"/>
    <property type="gene ID" value="WBGene00003386"/>
</dbReference>
<dbReference type="EnsemblMetazoa" id="K06C4.6b.1">
    <molecule id="Q9GQ00-2"/>
    <property type="protein sequence ID" value="K06C4.6b.1"/>
    <property type="gene ID" value="WBGene00003386"/>
</dbReference>
<dbReference type="EnsemblMetazoa" id="K06C4.6c.1">
    <molecule id="Q9GQ00-3"/>
    <property type="protein sequence ID" value="K06C4.6c.1"/>
    <property type="gene ID" value="WBGene00003386"/>
</dbReference>
<dbReference type="GeneID" id="179269"/>
<dbReference type="KEGG" id="cel:CELE_K06C4.6"/>
<dbReference type="UCSC" id="K06C4.6a">
    <property type="organism name" value="c. elegans"/>
</dbReference>
<dbReference type="AGR" id="WB:WBGene00003386"/>
<dbReference type="CTD" id="179269"/>
<dbReference type="WormBase" id="K06C4.6a">
    <molecule id="Q9GQ00-1"/>
    <property type="protein sequence ID" value="CE28590"/>
    <property type="gene ID" value="WBGene00003386"/>
    <property type="gene designation" value="mod-1"/>
</dbReference>
<dbReference type="WormBase" id="K06C4.6b">
    <molecule id="Q9GQ00-2"/>
    <property type="protein sequence ID" value="CE30814"/>
    <property type="gene ID" value="WBGene00003386"/>
    <property type="gene designation" value="mod-1"/>
</dbReference>
<dbReference type="WormBase" id="K06C4.6c">
    <molecule id="Q9GQ00-3"/>
    <property type="protein sequence ID" value="CE38391"/>
    <property type="gene ID" value="WBGene00003386"/>
    <property type="gene designation" value="mod-1"/>
</dbReference>
<dbReference type="eggNOG" id="KOG3644">
    <property type="taxonomic scope" value="Eukaryota"/>
</dbReference>
<dbReference type="HOGENOM" id="CLU_010920_1_3_1"/>
<dbReference type="InParanoid" id="Q9GQ00"/>
<dbReference type="OMA" id="WMEEAVT"/>
<dbReference type="OrthoDB" id="407674at2759"/>
<dbReference type="PhylomeDB" id="Q9GQ00"/>
<dbReference type="Reactome" id="R-CEL-112314">
    <property type="pathway name" value="Neurotransmitter receptors and postsynaptic signal transmission"/>
</dbReference>
<dbReference type="PRO" id="PR:Q9GQ00"/>
<dbReference type="Proteomes" id="UP000001940">
    <property type="component" value="Chromosome V"/>
</dbReference>
<dbReference type="Bgee" id="WBGene00003386">
    <property type="expression patterns" value="Expressed in larva and 2 other cell types or tissues"/>
</dbReference>
<dbReference type="ExpressionAtlas" id="Q9GQ00">
    <property type="expression patterns" value="baseline and differential"/>
</dbReference>
<dbReference type="GO" id="GO:0043025">
    <property type="term" value="C:neuronal cell body"/>
    <property type="evidence" value="ECO:0000314"/>
    <property type="project" value="WormBase"/>
</dbReference>
<dbReference type="GO" id="GO:0005886">
    <property type="term" value="C:plasma membrane"/>
    <property type="evidence" value="ECO:0000314"/>
    <property type="project" value="UniProtKB"/>
</dbReference>
<dbReference type="GO" id="GO:0099095">
    <property type="term" value="F:ligand-gated monoatomic anion channel activity"/>
    <property type="evidence" value="ECO:0000314"/>
    <property type="project" value="UniProtKB"/>
</dbReference>
<dbReference type="GO" id="GO:0051378">
    <property type="term" value="F:serotonin binding"/>
    <property type="evidence" value="ECO:0000314"/>
    <property type="project" value="UniProtKB"/>
</dbReference>
<dbReference type="GO" id="GO:0099589">
    <property type="term" value="F:serotonin receptor activity"/>
    <property type="evidence" value="ECO:0000314"/>
    <property type="project" value="UniProtKB"/>
</dbReference>
<dbReference type="GO" id="GO:0160039">
    <property type="term" value="F:serotonin-gated chloride channel activity"/>
    <property type="evidence" value="ECO:0000314"/>
    <property type="project" value="WormBase"/>
</dbReference>
<dbReference type="GO" id="GO:0042595">
    <property type="term" value="P:behavioral response to starvation"/>
    <property type="evidence" value="ECO:0000315"/>
    <property type="project" value="WormBase"/>
</dbReference>
<dbReference type="GO" id="GO:1902476">
    <property type="term" value="P:chloride transmembrane transport"/>
    <property type="evidence" value="ECO:0000314"/>
    <property type="project" value="UniProtKB"/>
</dbReference>
<dbReference type="GO" id="GO:0006821">
    <property type="term" value="P:chloride transport"/>
    <property type="evidence" value="ECO:0000314"/>
    <property type="project" value="WormBase"/>
</dbReference>
<dbReference type="GO" id="GO:0035641">
    <property type="term" value="P:locomotory exploration behavior"/>
    <property type="evidence" value="ECO:0000315"/>
    <property type="project" value="UniProtKB"/>
</dbReference>
<dbReference type="GO" id="GO:1904123">
    <property type="term" value="P:positive regulation of fatty acid beta-oxidation by serotonin receptor signaling pathway"/>
    <property type="evidence" value="ECO:0000315"/>
    <property type="project" value="WormBase"/>
</dbReference>
<dbReference type="GO" id="GO:0040012">
    <property type="term" value="P:regulation of locomotion"/>
    <property type="evidence" value="ECO:0000315"/>
    <property type="project" value="UniProtKB"/>
</dbReference>
<dbReference type="GO" id="GO:0007606">
    <property type="term" value="P:sensory perception of chemical stimulus"/>
    <property type="evidence" value="ECO:0000315"/>
    <property type="project" value="UniProtKB"/>
</dbReference>
<dbReference type="GO" id="GO:0007210">
    <property type="term" value="P:serotonin receptor signaling pathway"/>
    <property type="evidence" value="ECO:0000314"/>
    <property type="project" value="WormBase"/>
</dbReference>
<dbReference type="CDD" id="cd18990">
    <property type="entry name" value="LGIC_ECD_GABAAR"/>
    <property type="match status" value="1"/>
</dbReference>
<dbReference type="CDD" id="cd19049">
    <property type="entry name" value="LGIC_TM_anion"/>
    <property type="match status" value="1"/>
</dbReference>
<dbReference type="FunFam" id="2.70.170.10:FF:000035">
    <property type="entry name" value="Ligand-Gated ion Channel"/>
    <property type="match status" value="1"/>
</dbReference>
<dbReference type="Gene3D" id="2.70.170.10">
    <property type="entry name" value="Neurotransmitter-gated ion-channel ligand-binding domain"/>
    <property type="match status" value="1"/>
</dbReference>
<dbReference type="Gene3D" id="1.20.58.390">
    <property type="entry name" value="Neurotransmitter-gated ion-channel transmembrane domain"/>
    <property type="match status" value="1"/>
</dbReference>
<dbReference type="InterPro" id="IPR006028">
    <property type="entry name" value="GABAA/Glycine_rcpt"/>
</dbReference>
<dbReference type="InterPro" id="IPR006202">
    <property type="entry name" value="Neur_chan_lig-bd"/>
</dbReference>
<dbReference type="InterPro" id="IPR036734">
    <property type="entry name" value="Neur_chan_lig-bd_sf"/>
</dbReference>
<dbReference type="InterPro" id="IPR006201">
    <property type="entry name" value="Neur_channel"/>
</dbReference>
<dbReference type="InterPro" id="IPR036719">
    <property type="entry name" value="Neuro-gated_channel_TM_sf"/>
</dbReference>
<dbReference type="InterPro" id="IPR038050">
    <property type="entry name" value="Neuro_actylchol_rec"/>
</dbReference>
<dbReference type="InterPro" id="IPR006029">
    <property type="entry name" value="Neurotrans-gated_channel_TM"/>
</dbReference>
<dbReference type="InterPro" id="IPR018000">
    <property type="entry name" value="Neurotransmitter_ion_chnl_CS"/>
</dbReference>
<dbReference type="NCBIfam" id="TIGR00860">
    <property type="entry name" value="LIC"/>
    <property type="match status" value="1"/>
</dbReference>
<dbReference type="PANTHER" id="PTHR18945">
    <property type="entry name" value="NEUROTRANSMITTER GATED ION CHANNEL"/>
    <property type="match status" value="1"/>
</dbReference>
<dbReference type="Pfam" id="PF02931">
    <property type="entry name" value="Neur_chan_LBD"/>
    <property type="match status" value="1"/>
</dbReference>
<dbReference type="Pfam" id="PF02932">
    <property type="entry name" value="Neur_chan_memb"/>
    <property type="match status" value="1"/>
</dbReference>
<dbReference type="PRINTS" id="PR00253">
    <property type="entry name" value="GABAARECEPTR"/>
</dbReference>
<dbReference type="PRINTS" id="PR00252">
    <property type="entry name" value="NRIONCHANNEL"/>
</dbReference>
<dbReference type="SUPFAM" id="SSF90112">
    <property type="entry name" value="Neurotransmitter-gated ion-channel transmembrane pore"/>
    <property type="match status" value="1"/>
</dbReference>
<dbReference type="SUPFAM" id="SSF63712">
    <property type="entry name" value="Nicotinic receptor ligand binding domain-like"/>
    <property type="match status" value="1"/>
</dbReference>
<dbReference type="PROSITE" id="PS00236">
    <property type="entry name" value="NEUROTR_ION_CHANNEL"/>
    <property type="match status" value="1"/>
</dbReference>
<name>MOD1_CAEEL</name>
<gene>
    <name evidence="19" type="primary">mod-1</name>
    <name evidence="19" type="ORF">K06C4.6</name>
</gene>
<protein>
    <recommendedName>
        <fullName evidence="14">Serotonin-gated chloride channel mod-1</fullName>
    </recommendedName>
    <alternativeName>
        <fullName evidence="19">Modulation Of locomotion defective protein 1</fullName>
    </alternativeName>
</protein>